<organism>
    <name type="scientific">Drosophila melanogaster</name>
    <name type="common">Fruit fly</name>
    <dbReference type="NCBI Taxonomy" id="7227"/>
    <lineage>
        <taxon>Eukaryota</taxon>
        <taxon>Metazoa</taxon>
        <taxon>Ecdysozoa</taxon>
        <taxon>Arthropoda</taxon>
        <taxon>Hexapoda</taxon>
        <taxon>Insecta</taxon>
        <taxon>Pterygota</taxon>
        <taxon>Neoptera</taxon>
        <taxon>Endopterygota</taxon>
        <taxon>Diptera</taxon>
        <taxon>Brachycera</taxon>
        <taxon>Muscomorpha</taxon>
        <taxon>Ephydroidea</taxon>
        <taxon>Drosophilidae</taxon>
        <taxon>Drosophila</taxon>
        <taxon>Sophophora</taxon>
    </lineage>
</organism>
<feature type="chain" id="PRO_0000082520" description="Ubiquitin-conjugating enzyme E2-24 kDa">
    <location>
        <begin position="1"/>
        <end position="232"/>
    </location>
</feature>
<feature type="domain" description="UBC core" evidence="1">
    <location>
        <begin position="86"/>
        <end position="232"/>
    </location>
</feature>
<feature type="region of interest" description="Disordered" evidence="3">
    <location>
        <begin position="1"/>
        <end position="87"/>
    </location>
</feature>
<feature type="compositionally biased region" description="Low complexity" evidence="3">
    <location>
        <begin position="1"/>
        <end position="37"/>
    </location>
</feature>
<feature type="compositionally biased region" description="Gly residues" evidence="3">
    <location>
        <begin position="58"/>
        <end position="67"/>
    </location>
</feature>
<feature type="active site" description="Glycyl thioester intermediate" evidence="1 2">
    <location>
        <position position="170"/>
    </location>
</feature>
<accession>P52485</accession>
<accession>Q9VKQ4</accession>
<gene>
    <name evidence="4" type="primary">Ubc2</name>
    <name type="synonym">UbcD2</name>
    <name evidence="4" type="ORF">CG6720</name>
</gene>
<proteinExistence type="evidence at transcript level"/>
<sequence length="232" mass="24435">MSSTPAAGSAAEVATSSATSNAPSAPSTTASNVSNTSQPTTAGTPQARGGRGSNANGGASGSNAGGGDEPRKEAKTTPRISRALGTSAKRIQKELAEITLDPPPNCSAGPKGDNLYEWVSTILGPPGSVYEGGVFFLDIHFSPEYPFKPPKVTFRTRIYHCNINSQGVICLDILKDNWSPALTISKVLLSICSLLTDCNPADPLVGSIATQYLQNREEHDRIARLWTKRYAT</sequence>
<dbReference type="EC" id="2.3.2.23"/>
<dbReference type="EMBL" id="X92663">
    <property type="protein sequence ID" value="CAA63351.1"/>
    <property type="molecule type" value="mRNA"/>
</dbReference>
<dbReference type="EMBL" id="AE014134">
    <property type="protein sequence ID" value="AAF53008.1"/>
    <property type="molecule type" value="Genomic_DNA"/>
</dbReference>
<dbReference type="RefSeq" id="NP_001260362.1">
    <property type="nucleotide sequence ID" value="NM_001273433.1"/>
</dbReference>
<dbReference type="RefSeq" id="NP_001285814.1">
    <property type="nucleotide sequence ID" value="NM_001298885.1"/>
</dbReference>
<dbReference type="RefSeq" id="NP_477137.1">
    <property type="nucleotide sequence ID" value="NM_057789.4"/>
</dbReference>
<dbReference type="RefSeq" id="NP_723616.1">
    <property type="nucleotide sequence ID" value="NM_164943.2"/>
</dbReference>
<dbReference type="SMR" id="P52485"/>
<dbReference type="BioGRID" id="60561">
    <property type="interactions" value="26"/>
</dbReference>
<dbReference type="DIP" id="DIP-17329N"/>
<dbReference type="FunCoup" id="P52485">
    <property type="interactions" value="2036"/>
</dbReference>
<dbReference type="IntAct" id="P52485">
    <property type="interactions" value="15"/>
</dbReference>
<dbReference type="STRING" id="7227.FBpp0305676"/>
<dbReference type="SwissPalm" id="P52485"/>
<dbReference type="PaxDb" id="7227-FBpp0305676"/>
<dbReference type="DNASU" id="34487"/>
<dbReference type="EnsemblMetazoa" id="FBtr0080115">
    <property type="protein sequence ID" value="FBpp0079704"/>
    <property type="gene ID" value="FBgn0015320"/>
</dbReference>
<dbReference type="EnsemblMetazoa" id="FBtr0080116">
    <property type="protein sequence ID" value="FBpp0079705"/>
    <property type="gene ID" value="FBgn0015320"/>
</dbReference>
<dbReference type="EnsemblMetazoa" id="FBtr0333492">
    <property type="protein sequence ID" value="FBpp0305676"/>
    <property type="gene ID" value="FBgn0015320"/>
</dbReference>
<dbReference type="EnsemblMetazoa" id="FBtr0345437">
    <property type="protein sequence ID" value="FBpp0311562"/>
    <property type="gene ID" value="FBgn0015320"/>
</dbReference>
<dbReference type="GeneID" id="34487"/>
<dbReference type="KEGG" id="dme:Dmel_CG6720"/>
<dbReference type="AGR" id="FB:FBgn0015320"/>
<dbReference type="CTD" id="34487"/>
<dbReference type="FlyBase" id="FBgn0015320">
    <property type="gene designation" value="Ubc2"/>
</dbReference>
<dbReference type="VEuPathDB" id="VectorBase:FBgn0015320"/>
<dbReference type="eggNOG" id="KOG0417">
    <property type="taxonomic scope" value="Eukaryota"/>
</dbReference>
<dbReference type="HOGENOM" id="CLU_030988_14_0_1"/>
<dbReference type="InParanoid" id="P52485"/>
<dbReference type="OMA" id="GDRAKHD"/>
<dbReference type="OrthoDB" id="7851174at2759"/>
<dbReference type="PhylomeDB" id="P52485"/>
<dbReference type="Reactome" id="R-DME-1169408">
    <property type="pathway name" value="ISG15 antiviral mechanism"/>
</dbReference>
<dbReference type="Reactome" id="R-DME-141430">
    <property type="pathway name" value="Inactivation of APC/C via direct inhibition of the APC/C complex"/>
</dbReference>
<dbReference type="Reactome" id="R-DME-174048">
    <property type="pathway name" value="APC/C:Cdc20 mediated degradation of Cyclin B"/>
</dbReference>
<dbReference type="Reactome" id="R-DME-174084">
    <property type="pathway name" value="Autodegradation of Cdh1 by Cdh1:APC/C"/>
</dbReference>
<dbReference type="Reactome" id="R-DME-174154">
    <property type="pathway name" value="APC/C:Cdc20 mediated degradation of Securin"/>
</dbReference>
<dbReference type="Reactome" id="R-DME-174178">
    <property type="pathway name" value="APC/C:Cdh1 mediated degradation of Cdc20 and other APC/C:Cdh1 targeted proteins in late mitosis/early G1"/>
</dbReference>
<dbReference type="Reactome" id="R-DME-174184">
    <property type="pathway name" value="Cdc20:Phospho-APC/C mediated degradation of Cyclin A"/>
</dbReference>
<dbReference type="Reactome" id="R-DME-176407">
    <property type="pathway name" value="Conversion from APC/C:Cdc20 to APC/C:Cdh1 in late anaphase"/>
</dbReference>
<dbReference type="Reactome" id="R-DME-176408">
    <property type="pathway name" value="Regulation of APC/C activators between G1/S and early anaphase"/>
</dbReference>
<dbReference type="Reactome" id="R-DME-176409">
    <property type="pathway name" value="APC/C:Cdc20 mediated degradation of mitotic proteins"/>
</dbReference>
<dbReference type="Reactome" id="R-DME-176412">
    <property type="pathway name" value="Phosphorylation of the APC/C"/>
</dbReference>
<dbReference type="Reactome" id="R-DME-179409">
    <property type="pathway name" value="APC-Cdc20 mediated degradation of Nek2A"/>
</dbReference>
<dbReference type="Reactome" id="R-DME-2467813">
    <property type="pathway name" value="Separation of Sister Chromatids"/>
</dbReference>
<dbReference type="Reactome" id="R-DME-2559582">
    <property type="pathway name" value="Senescence-Associated Secretory Phenotype (SASP)"/>
</dbReference>
<dbReference type="Reactome" id="R-DME-69017">
    <property type="pathway name" value="CDK-mediated phosphorylation and removal of Cdc6"/>
</dbReference>
<dbReference type="Reactome" id="R-DME-8866652">
    <property type="pathway name" value="Synthesis of active ubiquitin: roles of E1 and E2 enzymes"/>
</dbReference>
<dbReference type="Reactome" id="R-DME-983168">
    <property type="pathway name" value="Antigen processing: Ubiquitination &amp; Proteasome degradation"/>
</dbReference>
<dbReference type="SignaLink" id="P52485"/>
<dbReference type="UniPathway" id="UPA00143"/>
<dbReference type="BioGRID-ORCS" id="34487">
    <property type="hits" value="1 hit in 3 CRISPR screens"/>
</dbReference>
<dbReference type="ChiTaRS" id="Ubc2">
    <property type="organism name" value="fly"/>
</dbReference>
<dbReference type="GenomeRNAi" id="34487"/>
<dbReference type="PRO" id="PR:P52485"/>
<dbReference type="Proteomes" id="UP000000803">
    <property type="component" value="Chromosome 2L"/>
</dbReference>
<dbReference type="Bgee" id="FBgn0015320">
    <property type="expression patterns" value="Expressed in wing disc and 222 other cell types or tissues"/>
</dbReference>
<dbReference type="ExpressionAtlas" id="P52485">
    <property type="expression patterns" value="baseline and differential"/>
</dbReference>
<dbReference type="GO" id="GO:0005634">
    <property type="term" value="C:nucleus"/>
    <property type="evidence" value="ECO:0000318"/>
    <property type="project" value="GO_Central"/>
</dbReference>
<dbReference type="GO" id="GO:0005524">
    <property type="term" value="F:ATP binding"/>
    <property type="evidence" value="ECO:0007669"/>
    <property type="project" value="UniProtKB-KW"/>
</dbReference>
<dbReference type="GO" id="GO:0061631">
    <property type="term" value="F:ubiquitin conjugating enzyme activity"/>
    <property type="evidence" value="ECO:0000318"/>
    <property type="project" value="GO_Central"/>
</dbReference>
<dbReference type="GO" id="GO:0004842">
    <property type="term" value="F:ubiquitin-protein transferase activity"/>
    <property type="evidence" value="ECO:0000316"/>
    <property type="project" value="FlyBase"/>
</dbReference>
<dbReference type="GO" id="GO:0019915">
    <property type="term" value="P:lipid storage"/>
    <property type="evidence" value="ECO:0000314"/>
    <property type="project" value="FlyBase"/>
</dbReference>
<dbReference type="GO" id="GO:0000209">
    <property type="term" value="P:protein polyubiquitination"/>
    <property type="evidence" value="ECO:0000250"/>
    <property type="project" value="FlyBase"/>
</dbReference>
<dbReference type="CDD" id="cd23793">
    <property type="entry name" value="UBCc_UBE2E"/>
    <property type="match status" value="1"/>
</dbReference>
<dbReference type="FunFam" id="3.10.110.10:FF:000003">
    <property type="entry name" value="Ubiquitin-conjugating enzyme E2 E3"/>
    <property type="match status" value="1"/>
</dbReference>
<dbReference type="Gene3D" id="3.10.110.10">
    <property type="entry name" value="Ubiquitin Conjugating Enzyme"/>
    <property type="match status" value="1"/>
</dbReference>
<dbReference type="InterPro" id="IPR000608">
    <property type="entry name" value="UBQ-conjugat_E2_core"/>
</dbReference>
<dbReference type="InterPro" id="IPR023313">
    <property type="entry name" value="UBQ-conjugating_AS"/>
</dbReference>
<dbReference type="InterPro" id="IPR016135">
    <property type="entry name" value="UBQ-conjugating_enzyme/RWD"/>
</dbReference>
<dbReference type="PANTHER" id="PTHR24068">
    <property type="entry name" value="UBIQUITIN-CONJUGATING ENZYME E2"/>
    <property type="match status" value="1"/>
</dbReference>
<dbReference type="Pfam" id="PF00179">
    <property type="entry name" value="UQ_con"/>
    <property type="match status" value="1"/>
</dbReference>
<dbReference type="SMART" id="SM00212">
    <property type="entry name" value="UBCc"/>
    <property type="match status" value="1"/>
</dbReference>
<dbReference type="SUPFAM" id="SSF54495">
    <property type="entry name" value="UBC-like"/>
    <property type="match status" value="1"/>
</dbReference>
<dbReference type="PROSITE" id="PS00183">
    <property type="entry name" value="UBC_1"/>
    <property type="match status" value="1"/>
</dbReference>
<dbReference type="PROSITE" id="PS50127">
    <property type="entry name" value="UBC_2"/>
    <property type="match status" value="1"/>
</dbReference>
<protein>
    <recommendedName>
        <fullName>Ubiquitin-conjugating enzyme E2-24 kDa</fullName>
        <ecNumber>2.3.2.23</ecNumber>
    </recommendedName>
    <alternativeName>
        <fullName>E2 ubiquitin-conjugating enzyme 2</fullName>
    </alternativeName>
    <alternativeName>
        <fullName>Ubiquitin carrier protein</fullName>
    </alternativeName>
    <alternativeName>
        <fullName>Ubiquitin-protein ligase</fullName>
    </alternativeName>
</protein>
<comment type="function">
    <text>Catalyzes the covalent attachment of ubiquitin to other proteins.</text>
</comment>
<comment type="catalytic activity">
    <reaction evidence="1 2">
        <text>S-ubiquitinyl-[E1 ubiquitin-activating enzyme]-L-cysteine + [E2 ubiquitin-conjugating enzyme]-L-cysteine = [E1 ubiquitin-activating enzyme]-L-cysteine + S-ubiquitinyl-[E2 ubiquitin-conjugating enzyme]-L-cysteine.</text>
        <dbReference type="EC" id="2.3.2.23"/>
    </reaction>
</comment>
<comment type="pathway">
    <text evidence="1">Protein modification; protein ubiquitination.</text>
</comment>
<comment type="similarity">
    <text evidence="1">Belongs to the ubiquitin-conjugating enzyme family.</text>
</comment>
<keyword id="KW-0067">ATP-binding</keyword>
<keyword id="KW-0547">Nucleotide-binding</keyword>
<keyword id="KW-1185">Reference proteome</keyword>
<keyword id="KW-0808">Transferase</keyword>
<keyword id="KW-0833">Ubl conjugation pathway</keyword>
<evidence type="ECO:0000255" key="1">
    <source>
        <dbReference type="PROSITE-ProRule" id="PRU00388"/>
    </source>
</evidence>
<evidence type="ECO:0000255" key="2">
    <source>
        <dbReference type="PROSITE-ProRule" id="PRU10133"/>
    </source>
</evidence>
<evidence type="ECO:0000256" key="3">
    <source>
        <dbReference type="SAM" id="MobiDB-lite"/>
    </source>
</evidence>
<evidence type="ECO:0000312" key="4">
    <source>
        <dbReference type="FlyBase" id="FBgn0015320"/>
    </source>
</evidence>
<name>UBCD2_DROME</name>
<reference key="1">
    <citation type="journal article" date="1996" name="J. Biol. Chem.">
        <title>Identification of a novel family of ubiquitin-conjugating enzymes with distinct amino-terminal extensions.</title>
        <authorList>
            <person name="Matuschewski K."/>
            <person name="Hauser H.P."/>
            <person name="Treier M."/>
            <person name="Jentsch S."/>
        </authorList>
    </citation>
    <scope>NUCLEOTIDE SEQUENCE [MRNA]</scope>
    <source>
        <strain>DP CN BW</strain>
    </source>
</reference>
<reference key="2">
    <citation type="journal article" date="2000" name="Science">
        <title>The genome sequence of Drosophila melanogaster.</title>
        <authorList>
            <person name="Adams M.D."/>
            <person name="Celniker S.E."/>
            <person name="Holt R.A."/>
            <person name="Evans C.A."/>
            <person name="Gocayne J.D."/>
            <person name="Amanatides P.G."/>
            <person name="Scherer S.E."/>
            <person name="Li P.W."/>
            <person name="Hoskins R.A."/>
            <person name="Galle R.F."/>
            <person name="George R.A."/>
            <person name="Lewis S.E."/>
            <person name="Richards S."/>
            <person name="Ashburner M."/>
            <person name="Henderson S.N."/>
            <person name="Sutton G.G."/>
            <person name="Wortman J.R."/>
            <person name="Yandell M.D."/>
            <person name="Zhang Q."/>
            <person name="Chen L.X."/>
            <person name="Brandon R.C."/>
            <person name="Rogers Y.-H.C."/>
            <person name="Blazej R.G."/>
            <person name="Champe M."/>
            <person name="Pfeiffer B.D."/>
            <person name="Wan K.H."/>
            <person name="Doyle C."/>
            <person name="Baxter E.G."/>
            <person name="Helt G."/>
            <person name="Nelson C.R."/>
            <person name="Miklos G.L.G."/>
            <person name="Abril J.F."/>
            <person name="Agbayani A."/>
            <person name="An H.-J."/>
            <person name="Andrews-Pfannkoch C."/>
            <person name="Baldwin D."/>
            <person name="Ballew R.M."/>
            <person name="Basu A."/>
            <person name="Baxendale J."/>
            <person name="Bayraktaroglu L."/>
            <person name="Beasley E.M."/>
            <person name="Beeson K.Y."/>
            <person name="Benos P.V."/>
            <person name="Berman B.P."/>
            <person name="Bhandari D."/>
            <person name="Bolshakov S."/>
            <person name="Borkova D."/>
            <person name="Botchan M.R."/>
            <person name="Bouck J."/>
            <person name="Brokstein P."/>
            <person name="Brottier P."/>
            <person name="Burtis K.C."/>
            <person name="Busam D.A."/>
            <person name="Butler H."/>
            <person name="Cadieu E."/>
            <person name="Center A."/>
            <person name="Chandra I."/>
            <person name="Cherry J.M."/>
            <person name="Cawley S."/>
            <person name="Dahlke C."/>
            <person name="Davenport L.B."/>
            <person name="Davies P."/>
            <person name="de Pablos B."/>
            <person name="Delcher A."/>
            <person name="Deng Z."/>
            <person name="Mays A.D."/>
            <person name="Dew I."/>
            <person name="Dietz S.M."/>
            <person name="Dodson K."/>
            <person name="Doup L.E."/>
            <person name="Downes M."/>
            <person name="Dugan-Rocha S."/>
            <person name="Dunkov B.C."/>
            <person name="Dunn P."/>
            <person name="Durbin K.J."/>
            <person name="Evangelista C.C."/>
            <person name="Ferraz C."/>
            <person name="Ferriera S."/>
            <person name="Fleischmann W."/>
            <person name="Fosler C."/>
            <person name="Gabrielian A.E."/>
            <person name="Garg N.S."/>
            <person name="Gelbart W.M."/>
            <person name="Glasser K."/>
            <person name="Glodek A."/>
            <person name="Gong F."/>
            <person name="Gorrell J.H."/>
            <person name="Gu Z."/>
            <person name="Guan P."/>
            <person name="Harris M."/>
            <person name="Harris N.L."/>
            <person name="Harvey D.A."/>
            <person name="Heiman T.J."/>
            <person name="Hernandez J.R."/>
            <person name="Houck J."/>
            <person name="Hostin D."/>
            <person name="Houston K.A."/>
            <person name="Howland T.J."/>
            <person name="Wei M.-H."/>
            <person name="Ibegwam C."/>
            <person name="Jalali M."/>
            <person name="Kalush F."/>
            <person name="Karpen G.H."/>
            <person name="Ke Z."/>
            <person name="Kennison J.A."/>
            <person name="Ketchum K.A."/>
            <person name="Kimmel B.E."/>
            <person name="Kodira C.D."/>
            <person name="Kraft C.L."/>
            <person name="Kravitz S."/>
            <person name="Kulp D."/>
            <person name="Lai Z."/>
            <person name="Lasko P."/>
            <person name="Lei Y."/>
            <person name="Levitsky A.A."/>
            <person name="Li J.H."/>
            <person name="Li Z."/>
            <person name="Liang Y."/>
            <person name="Lin X."/>
            <person name="Liu X."/>
            <person name="Mattei B."/>
            <person name="McIntosh T.C."/>
            <person name="McLeod M.P."/>
            <person name="McPherson D."/>
            <person name="Merkulov G."/>
            <person name="Milshina N.V."/>
            <person name="Mobarry C."/>
            <person name="Morris J."/>
            <person name="Moshrefi A."/>
            <person name="Mount S.M."/>
            <person name="Moy M."/>
            <person name="Murphy B."/>
            <person name="Murphy L."/>
            <person name="Muzny D.M."/>
            <person name="Nelson D.L."/>
            <person name="Nelson D.R."/>
            <person name="Nelson K.A."/>
            <person name="Nixon K."/>
            <person name="Nusskern D.R."/>
            <person name="Pacleb J.M."/>
            <person name="Palazzolo M."/>
            <person name="Pittman G.S."/>
            <person name="Pan S."/>
            <person name="Pollard J."/>
            <person name="Puri V."/>
            <person name="Reese M.G."/>
            <person name="Reinert K."/>
            <person name="Remington K."/>
            <person name="Saunders R.D.C."/>
            <person name="Scheeler F."/>
            <person name="Shen H."/>
            <person name="Shue B.C."/>
            <person name="Siden-Kiamos I."/>
            <person name="Simpson M."/>
            <person name="Skupski M.P."/>
            <person name="Smith T.J."/>
            <person name="Spier E."/>
            <person name="Spradling A.C."/>
            <person name="Stapleton M."/>
            <person name="Strong R."/>
            <person name="Sun E."/>
            <person name="Svirskas R."/>
            <person name="Tector C."/>
            <person name="Turner R."/>
            <person name="Venter E."/>
            <person name="Wang A.H."/>
            <person name="Wang X."/>
            <person name="Wang Z.-Y."/>
            <person name="Wassarman D.A."/>
            <person name="Weinstock G.M."/>
            <person name="Weissenbach J."/>
            <person name="Williams S.M."/>
            <person name="Woodage T."/>
            <person name="Worley K.C."/>
            <person name="Wu D."/>
            <person name="Yang S."/>
            <person name="Yao Q.A."/>
            <person name="Ye J."/>
            <person name="Yeh R.-F."/>
            <person name="Zaveri J.S."/>
            <person name="Zhan M."/>
            <person name="Zhang G."/>
            <person name="Zhao Q."/>
            <person name="Zheng L."/>
            <person name="Zheng X.H."/>
            <person name="Zhong F.N."/>
            <person name="Zhong W."/>
            <person name="Zhou X."/>
            <person name="Zhu S.C."/>
            <person name="Zhu X."/>
            <person name="Smith H.O."/>
            <person name="Gibbs R.A."/>
            <person name="Myers E.W."/>
            <person name="Rubin G.M."/>
            <person name="Venter J.C."/>
        </authorList>
    </citation>
    <scope>NUCLEOTIDE SEQUENCE [LARGE SCALE GENOMIC DNA]</scope>
    <source>
        <strain>Berkeley</strain>
    </source>
</reference>
<reference key="3">
    <citation type="journal article" date="2002" name="Genome Biol.">
        <title>Annotation of the Drosophila melanogaster euchromatic genome: a systematic review.</title>
        <authorList>
            <person name="Misra S."/>
            <person name="Crosby M.A."/>
            <person name="Mungall C.J."/>
            <person name="Matthews B.B."/>
            <person name="Campbell K.S."/>
            <person name="Hradecky P."/>
            <person name="Huang Y."/>
            <person name="Kaminker J.S."/>
            <person name="Millburn G.H."/>
            <person name="Prochnik S.E."/>
            <person name="Smith C.D."/>
            <person name="Tupy J.L."/>
            <person name="Whitfield E.J."/>
            <person name="Bayraktaroglu L."/>
            <person name="Berman B.P."/>
            <person name="Bettencourt B.R."/>
            <person name="Celniker S.E."/>
            <person name="de Grey A.D.N.J."/>
            <person name="Drysdale R.A."/>
            <person name="Harris N.L."/>
            <person name="Richter J."/>
            <person name="Russo S."/>
            <person name="Schroeder A.J."/>
            <person name="Shu S.Q."/>
            <person name="Stapleton M."/>
            <person name="Yamada C."/>
            <person name="Ashburner M."/>
            <person name="Gelbart W.M."/>
            <person name="Rubin G.M."/>
            <person name="Lewis S.E."/>
        </authorList>
    </citation>
    <scope>GENOME REANNOTATION</scope>
    <source>
        <strain>Berkeley</strain>
    </source>
</reference>